<keyword id="KW-0067">ATP-binding</keyword>
<keyword id="KW-0966">Cell projection</keyword>
<keyword id="KW-0963">Cytoplasm</keyword>
<keyword id="KW-0418">Kinase</keyword>
<keyword id="KW-0547">Nucleotide-binding</keyword>
<keyword id="KW-1185">Reference proteome</keyword>
<keyword id="KW-0723">Serine/threonine-protein kinase</keyword>
<keyword id="KW-0808">Transferase</keyword>
<reference key="1">
    <citation type="journal article" date="1998" name="Science">
        <title>Genome sequence of the nematode C. elegans: a platform for investigating biology.</title>
        <authorList>
            <consortium name="The C. elegans sequencing consortium"/>
        </authorList>
    </citation>
    <scope>NUCLEOTIDE SEQUENCE [LARGE SCALE GENOMIC DNA]</scope>
    <source>
        <strain>Bristol N2</strain>
    </source>
</reference>
<reference key="2">
    <citation type="journal article" date="2022" name="Development">
        <title>Sperm-specific glycogen synthase kinase 3 is required for sperm motility and the post-fertilization signal for female meiosis II in Caenorhabditis elegans.</title>
        <authorList>
            <person name="Banerjee R.P."/>
            <person name="Srayko M."/>
        </authorList>
    </citation>
    <scope>FUNCTION</scope>
    <scope>CATALYTIC ACTIVITY</scope>
    <scope>TISSUE SPECIFICITY</scope>
</reference>
<evidence type="ECO:0000250" key="1">
    <source>
        <dbReference type="UniProtKB" id="P21965"/>
    </source>
</evidence>
<evidence type="ECO:0000255" key="2">
    <source>
        <dbReference type="PROSITE-ProRule" id="PRU00159"/>
    </source>
</evidence>
<evidence type="ECO:0000255" key="3">
    <source>
        <dbReference type="PROSITE-ProRule" id="PRU10027"/>
    </source>
</evidence>
<evidence type="ECO:0000256" key="4">
    <source>
        <dbReference type="SAM" id="MobiDB-lite"/>
    </source>
</evidence>
<evidence type="ECO:0000269" key="5">
    <source>
    </source>
</evidence>
<evidence type="ECO:0000305" key="6">
    <source>
    </source>
</evidence>
<evidence type="ECO:0000312" key="7">
    <source>
        <dbReference type="WormBase" id="R03D7.5a"/>
    </source>
</evidence>
<gene>
    <name evidence="7" type="primary">gskl-1</name>
    <name type="ORF">R03D7.5</name>
</gene>
<proteinExistence type="evidence at protein level"/>
<protein>
    <recommendedName>
        <fullName evidence="6">Putative serine/threonine-protein kinase gskl-1</fullName>
        <ecNumber evidence="6">2.7.11.1</ecNumber>
    </recommendedName>
    <alternativeName>
        <fullName evidence="7">GSK3-like 1</fullName>
    </alternativeName>
</protein>
<accession>Q09595</accession>
<dbReference type="EC" id="2.7.11.1" evidence="6"/>
<dbReference type="EMBL" id="Z46828">
    <property type="protein sequence ID" value="CAA86858.2"/>
    <property type="molecule type" value="Genomic_DNA"/>
</dbReference>
<dbReference type="PIR" id="T23871">
    <property type="entry name" value="T23871"/>
</dbReference>
<dbReference type="SMR" id="Q09595"/>
<dbReference type="FunCoup" id="Q09595">
    <property type="interactions" value="189"/>
</dbReference>
<dbReference type="STRING" id="6239.R03D7.5a.1"/>
<dbReference type="PaxDb" id="6239-R03D7.5"/>
<dbReference type="EnsemblMetazoa" id="R03D7.5a.1">
    <property type="protein sequence ID" value="R03D7.5a.1"/>
    <property type="gene ID" value="WBGene00010991"/>
</dbReference>
<dbReference type="KEGG" id="cel:CELE_R03D7.5"/>
<dbReference type="UCSC" id="R03D7.5">
    <property type="organism name" value="c. elegans"/>
</dbReference>
<dbReference type="AGR" id="WB:WBGene00010991"/>
<dbReference type="CTD" id="187536"/>
<dbReference type="WormBase" id="R03D7.5a">
    <property type="protein sequence ID" value="CE35899"/>
    <property type="gene ID" value="WBGene00010991"/>
    <property type="gene designation" value="gskl-1"/>
</dbReference>
<dbReference type="eggNOG" id="KOG0658">
    <property type="taxonomic scope" value="Eukaryota"/>
</dbReference>
<dbReference type="GeneTree" id="ENSGT00520000055635"/>
<dbReference type="HOGENOM" id="CLU_000288_181_20_1"/>
<dbReference type="InParanoid" id="Q09595"/>
<dbReference type="OMA" id="FGCEKFT"/>
<dbReference type="OrthoDB" id="2873631at2759"/>
<dbReference type="PhylomeDB" id="Q09595"/>
<dbReference type="Reactome" id="R-CEL-195253">
    <property type="pathway name" value="Degradation of beta-catenin by the destruction complex"/>
</dbReference>
<dbReference type="Reactome" id="R-CEL-196299">
    <property type="pathway name" value="Beta-catenin phosphorylation cascade"/>
</dbReference>
<dbReference type="Reactome" id="R-CEL-3371453">
    <property type="pathway name" value="Regulation of HSF1-mediated heat shock response"/>
</dbReference>
<dbReference type="Reactome" id="R-CEL-399956">
    <property type="pathway name" value="CRMPs in Sema3A signaling"/>
</dbReference>
<dbReference type="Reactome" id="R-CEL-4641262">
    <property type="pathway name" value="Disassembly of the destruction complex and recruitment of AXIN to the membrane"/>
</dbReference>
<dbReference type="Reactome" id="R-CEL-9762114">
    <property type="pathway name" value="GSK3B and BTRC:CUL1-mediated-degradation of NFE2L2"/>
</dbReference>
<dbReference type="Reactome" id="R-CEL-9856649">
    <property type="pathway name" value="Transcriptional and post-translational regulation of MITF-M expression and activity"/>
</dbReference>
<dbReference type="PRO" id="PR:Q09595"/>
<dbReference type="Proteomes" id="UP000001940">
    <property type="component" value="Chromosome II"/>
</dbReference>
<dbReference type="Bgee" id="WBGene00010991">
    <property type="expression patterns" value="Expressed in adult organism and 1 other cell type or tissue"/>
</dbReference>
<dbReference type="ExpressionAtlas" id="Q09595">
    <property type="expression patterns" value="baseline and differential"/>
</dbReference>
<dbReference type="GO" id="GO:0030424">
    <property type="term" value="C:axon"/>
    <property type="evidence" value="ECO:0000318"/>
    <property type="project" value="GO_Central"/>
</dbReference>
<dbReference type="GO" id="GO:0005737">
    <property type="term" value="C:cytoplasm"/>
    <property type="evidence" value="ECO:0000318"/>
    <property type="project" value="GO_Central"/>
</dbReference>
<dbReference type="GO" id="GO:0005829">
    <property type="term" value="C:cytosol"/>
    <property type="evidence" value="ECO:0000318"/>
    <property type="project" value="GO_Central"/>
</dbReference>
<dbReference type="GO" id="GO:0005634">
    <property type="term" value="C:nucleus"/>
    <property type="evidence" value="ECO:0000318"/>
    <property type="project" value="GO_Central"/>
</dbReference>
<dbReference type="GO" id="GO:0005524">
    <property type="term" value="F:ATP binding"/>
    <property type="evidence" value="ECO:0007669"/>
    <property type="project" value="UniProtKB-KW"/>
</dbReference>
<dbReference type="GO" id="GO:0106310">
    <property type="term" value="F:protein serine kinase activity"/>
    <property type="evidence" value="ECO:0007669"/>
    <property type="project" value="RHEA"/>
</dbReference>
<dbReference type="GO" id="GO:0004674">
    <property type="term" value="F:protein serine/threonine kinase activity"/>
    <property type="evidence" value="ECO:0000318"/>
    <property type="project" value="GO_Central"/>
</dbReference>
<dbReference type="GO" id="GO:0030154">
    <property type="term" value="P:cell differentiation"/>
    <property type="evidence" value="ECO:0000318"/>
    <property type="project" value="GO_Central"/>
</dbReference>
<dbReference type="GO" id="GO:0090090">
    <property type="term" value="P:negative regulation of canonical Wnt signaling pathway"/>
    <property type="evidence" value="ECO:0000318"/>
    <property type="project" value="GO_Central"/>
</dbReference>
<dbReference type="GO" id="GO:0032436">
    <property type="term" value="P:positive regulation of proteasomal ubiquitin-dependent protein catabolic process"/>
    <property type="evidence" value="ECO:0000318"/>
    <property type="project" value="GO_Central"/>
</dbReference>
<dbReference type="GO" id="GO:0070507">
    <property type="term" value="P:regulation of microtubule cytoskeleton organization"/>
    <property type="evidence" value="ECO:0000318"/>
    <property type="project" value="GO_Central"/>
</dbReference>
<dbReference type="GO" id="GO:0007165">
    <property type="term" value="P:signal transduction"/>
    <property type="evidence" value="ECO:0000318"/>
    <property type="project" value="GO_Central"/>
</dbReference>
<dbReference type="Gene3D" id="3.30.200.20">
    <property type="entry name" value="Phosphorylase Kinase, domain 1"/>
    <property type="match status" value="1"/>
</dbReference>
<dbReference type="Gene3D" id="1.10.510.10">
    <property type="entry name" value="Transferase(Phosphotransferase) domain 1"/>
    <property type="match status" value="1"/>
</dbReference>
<dbReference type="InterPro" id="IPR050591">
    <property type="entry name" value="GSK-3"/>
</dbReference>
<dbReference type="InterPro" id="IPR011009">
    <property type="entry name" value="Kinase-like_dom_sf"/>
</dbReference>
<dbReference type="InterPro" id="IPR000719">
    <property type="entry name" value="Prot_kinase_dom"/>
</dbReference>
<dbReference type="InterPro" id="IPR008271">
    <property type="entry name" value="Ser/Thr_kinase_AS"/>
</dbReference>
<dbReference type="PANTHER" id="PTHR24057">
    <property type="entry name" value="GLYCOGEN SYNTHASE KINASE-3 ALPHA"/>
    <property type="match status" value="1"/>
</dbReference>
<dbReference type="PANTHER" id="PTHR24057:SF18">
    <property type="entry name" value="SERINE_THREONINE-PROTEIN KINASE R03D7.5-RELATED"/>
    <property type="match status" value="1"/>
</dbReference>
<dbReference type="Pfam" id="PF00069">
    <property type="entry name" value="Pkinase"/>
    <property type="match status" value="1"/>
</dbReference>
<dbReference type="SMART" id="SM00220">
    <property type="entry name" value="S_TKc"/>
    <property type="match status" value="1"/>
</dbReference>
<dbReference type="SUPFAM" id="SSF56112">
    <property type="entry name" value="Protein kinase-like (PK-like)"/>
    <property type="match status" value="1"/>
</dbReference>
<dbReference type="PROSITE" id="PS50011">
    <property type="entry name" value="PROTEIN_KINASE_DOM"/>
    <property type="match status" value="1"/>
</dbReference>
<dbReference type="PROSITE" id="PS00108">
    <property type="entry name" value="PROTEIN_KINASE_ST"/>
    <property type="match status" value="1"/>
</dbReference>
<organism>
    <name type="scientific">Caenorhabditis elegans</name>
    <dbReference type="NCBI Taxonomy" id="6239"/>
    <lineage>
        <taxon>Eukaryota</taxon>
        <taxon>Metazoa</taxon>
        <taxon>Ecdysozoa</taxon>
        <taxon>Nematoda</taxon>
        <taxon>Chromadorea</taxon>
        <taxon>Rhabditida</taxon>
        <taxon>Rhabditina</taxon>
        <taxon>Rhabditomorpha</taxon>
        <taxon>Rhabditoidea</taxon>
        <taxon>Rhabditidae</taxon>
        <taxon>Peloderinae</taxon>
        <taxon>Caenorhabditis</taxon>
    </lineage>
</organism>
<sequence>MMNGFGIKNNGEFYSVSLQFGAHKLCGSGRFSNVYCGQMISPIEKEVAVKNVWSDTETRHLATSEYPEIQILSKLFHPAISNLLYFYSRNANDKVINCLVLDYLPQDLARLRDQGVKFDVLDAKLYTFQLFCAISHLTSKNIVHMDIKPQNVVMDRMAGRLKLADFGNARRLETNEKTGSAYQVTRFYRPPELLFGCEKFTASIDIWSATCVAFELFANRVLFKGKDTKDQIVLITGVFGYPTDDDIKSIGVKRPRVARKDARGIETFTSKMLDSEIYDFMKATLKIDPKKRKSAIDVLKMPLFDILRSSPPKKRSNGVEMPNLASYTEMHHKREPETEVVADIQTTEKAEKESDSTNEELED</sequence>
<comment type="function">
    <text evidence="1 5">May be an autophosphorylating tyrosine kinase, a bifunctional (serine/tyrosine-specific) protein kinase, or a serine kinase that is a substrate for an associated tyrosine kinase (By similarity). Acting in concert with putative serine/threonine-protein kinase gskl-2, required for sister chromatid segregation and spermatid budding during male meiosis (PubMed:35635101). Plays a role in regulating female meiosis II, together with gskl-2 (PubMed:35635101). Involved in sperm pseudopod formation and function, together with gskl-2 (PubMed:35635101).</text>
</comment>
<comment type="catalytic activity">
    <reaction evidence="6">
        <text>L-seryl-[protein] + ATP = O-phospho-L-seryl-[protein] + ADP + H(+)</text>
        <dbReference type="Rhea" id="RHEA:17989"/>
        <dbReference type="Rhea" id="RHEA-COMP:9863"/>
        <dbReference type="Rhea" id="RHEA-COMP:11604"/>
        <dbReference type="ChEBI" id="CHEBI:15378"/>
        <dbReference type="ChEBI" id="CHEBI:29999"/>
        <dbReference type="ChEBI" id="CHEBI:30616"/>
        <dbReference type="ChEBI" id="CHEBI:83421"/>
        <dbReference type="ChEBI" id="CHEBI:456216"/>
        <dbReference type="EC" id="2.7.11.1"/>
    </reaction>
</comment>
<comment type="catalytic activity">
    <reaction evidence="6">
        <text>L-threonyl-[protein] + ATP = O-phospho-L-threonyl-[protein] + ADP + H(+)</text>
        <dbReference type="Rhea" id="RHEA:46608"/>
        <dbReference type="Rhea" id="RHEA-COMP:11060"/>
        <dbReference type="Rhea" id="RHEA-COMP:11605"/>
        <dbReference type="ChEBI" id="CHEBI:15378"/>
        <dbReference type="ChEBI" id="CHEBI:30013"/>
        <dbReference type="ChEBI" id="CHEBI:30616"/>
        <dbReference type="ChEBI" id="CHEBI:61977"/>
        <dbReference type="ChEBI" id="CHEBI:456216"/>
        <dbReference type="EC" id="2.7.11.1"/>
    </reaction>
</comment>
<comment type="subcellular location">
    <subcellularLocation>
        <location evidence="5">Cytoplasm</location>
    </subcellularLocation>
    <subcellularLocation>
        <location evidence="5">Cell projection</location>
        <location evidence="5">Pseudopodium</location>
    </subcellularLocation>
    <text evidence="5">Expressed throughout the cytoplasm in inactive sperm from males (PubMed:35635101). However, in activated sperm, becomes concentrated to the pseudopod (PubMed:35635101).</text>
</comment>
<comment type="tissue specificity">
    <text evidence="5">Expressed during multiple stages of spermatogenesis, in males and hermaphrodites (at protein level).</text>
</comment>
<comment type="similarity">
    <text evidence="2">Belongs to the protein kinase superfamily. Ser/Thr protein kinase family.</text>
</comment>
<feature type="chain" id="PRO_0000086843" description="Putative serine/threonine-protein kinase gskl-1">
    <location>
        <begin position="1"/>
        <end position="363"/>
    </location>
</feature>
<feature type="domain" description="Protein kinase" evidence="2">
    <location>
        <begin position="20"/>
        <end position="304"/>
    </location>
</feature>
<feature type="region of interest" description="Disordered" evidence="4">
    <location>
        <begin position="311"/>
        <end position="363"/>
    </location>
</feature>
<feature type="compositionally biased region" description="Basic and acidic residues" evidence="4">
    <location>
        <begin position="346"/>
        <end position="355"/>
    </location>
</feature>
<feature type="active site" description="Proton acceptor" evidence="2 3">
    <location>
        <position position="146"/>
    </location>
</feature>
<feature type="binding site" evidence="2">
    <location>
        <begin position="26"/>
        <end position="34"/>
    </location>
    <ligand>
        <name>ATP</name>
        <dbReference type="ChEBI" id="CHEBI:30616"/>
    </ligand>
</feature>
<feature type="binding site" evidence="2">
    <location>
        <position position="50"/>
    </location>
    <ligand>
        <name>ATP</name>
        <dbReference type="ChEBI" id="CHEBI:30616"/>
    </ligand>
</feature>
<name>YRL5_CAEEL</name>